<organism>
    <name type="scientific">Synechocystis sp. (strain ATCC 27184 / PCC 6803 / Kazusa)</name>
    <dbReference type="NCBI Taxonomy" id="1111708"/>
    <lineage>
        <taxon>Bacteria</taxon>
        <taxon>Bacillati</taxon>
        <taxon>Cyanobacteriota</taxon>
        <taxon>Cyanophyceae</taxon>
        <taxon>Synechococcales</taxon>
        <taxon>Merismopediaceae</taxon>
        <taxon>Synechocystis</taxon>
    </lineage>
</organism>
<keyword id="KW-0997">Cell inner membrane</keyword>
<keyword id="KW-1003">Cell membrane</keyword>
<keyword id="KW-0963">Cytoplasm</keyword>
<keyword id="KW-0342">GTP-binding</keyword>
<keyword id="KW-0472">Membrane</keyword>
<keyword id="KW-0547">Nucleotide-binding</keyword>
<keyword id="KW-1185">Reference proteome</keyword>
<keyword id="KW-0690">Ribosome biogenesis</keyword>
<keyword id="KW-0694">RNA-binding</keyword>
<keyword id="KW-0699">rRNA-binding</keyword>
<feature type="chain" id="PRO_0000180065" description="GTPase Era">
    <location>
        <begin position="1"/>
        <end position="315"/>
    </location>
</feature>
<feature type="domain" description="Era-type G" evidence="2">
    <location>
        <begin position="21"/>
        <end position="190"/>
    </location>
</feature>
<feature type="domain" description="KH type-2" evidence="1">
    <location>
        <begin position="221"/>
        <end position="297"/>
    </location>
</feature>
<feature type="region of interest" description="G1" evidence="2">
    <location>
        <begin position="29"/>
        <end position="36"/>
    </location>
</feature>
<feature type="region of interest" description="G2" evidence="2">
    <location>
        <begin position="55"/>
        <end position="59"/>
    </location>
</feature>
<feature type="region of interest" description="G3" evidence="2">
    <location>
        <begin position="76"/>
        <end position="79"/>
    </location>
</feature>
<feature type="region of interest" description="G4" evidence="2">
    <location>
        <begin position="138"/>
        <end position="141"/>
    </location>
</feature>
<feature type="region of interest" description="G5" evidence="2">
    <location>
        <begin position="169"/>
        <end position="171"/>
    </location>
</feature>
<feature type="binding site" evidence="1">
    <location>
        <begin position="29"/>
        <end position="36"/>
    </location>
    <ligand>
        <name>GTP</name>
        <dbReference type="ChEBI" id="CHEBI:37565"/>
    </ligand>
</feature>
<feature type="binding site" evidence="1">
    <location>
        <begin position="76"/>
        <end position="80"/>
    </location>
    <ligand>
        <name>GTP</name>
        <dbReference type="ChEBI" id="CHEBI:37565"/>
    </ligand>
</feature>
<feature type="binding site" evidence="1">
    <location>
        <begin position="138"/>
        <end position="141"/>
    </location>
    <ligand>
        <name>GTP</name>
        <dbReference type="ChEBI" id="CHEBI:37565"/>
    </ligand>
</feature>
<protein>
    <recommendedName>
        <fullName evidence="1">GTPase Era</fullName>
    </recommendedName>
</protein>
<reference key="1">
    <citation type="journal article" date="1995" name="DNA Res.">
        <title>Sequence analysis of the genome of the unicellular cyanobacterium Synechocystis sp. strain PCC6803. I. Sequence features in the 1 Mb region from map positions 64% to 92% of the genome.</title>
        <authorList>
            <person name="Kaneko T."/>
            <person name="Tanaka A."/>
            <person name="Sato S."/>
            <person name="Kotani H."/>
            <person name="Sazuka T."/>
            <person name="Miyajima N."/>
            <person name="Sugiura M."/>
            <person name="Tabata S."/>
        </authorList>
    </citation>
    <scope>NUCLEOTIDE SEQUENCE [LARGE SCALE GENOMIC DNA]</scope>
    <source>
        <strain>ATCC 27184 / PCC 6803 / N-1</strain>
    </source>
</reference>
<reference key="2">
    <citation type="journal article" date="1996" name="DNA Res.">
        <title>Sequence analysis of the genome of the unicellular cyanobacterium Synechocystis sp. strain PCC6803. II. Sequence determination of the entire genome and assignment of potential protein-coding regions.</title>
        <authorList>
            <person name="Kaneko T."/>
            <person name="Sato S."/>
            <person name="Kotani H."/>
            <person name="Tanaka A."/>
            <person name="Asamizu E."/>
            <person name="Nakamura Y."/>
            <person name="Miyajima N."/>
            <person name="Hirosawa M."/>
            <person name="Sugiura M."/>
            <person name="Sasamoto S."/>
            <person name="Kimura T."/>
            <person name="Hosouchi T."/>
            <person name="Matsuno A."/>
            <person name="Muraki A."/>
            <person name="Nakazaki N."/>
            <person name="Naruo K."/>
            <person name="Okumura S."/>
            <person name="Shimpo S."/>
            <person name="Takeuchi C."/>
            <person name="Wada T."/>
            <person name="Watanabe A."/>
            <person name="Yamada M."/>
            <person name="Yasuda M."/>
            <person name="Tabata S."/>
        </authorList>
    </citation>
    <scope>NUCLEOTIDE SEQUENCE [LARGE SCALE GENOMIC DNA]</scope>
    <source>
        <strain>ATCC 27184 / PCC 6803 / Kazusa</strain>
    </source>
</reference>
<name>ERA_SYNY3</name>
<evidence type="ECO:0000255" key="1">
    <source>
        <dbReference type="HAMAP-Rule" id="MF_00367"/>
    </source>
</evidence>
<evidence type="ECO:0000255" key="2">
    <source>
        <dbReference type="PROSITE-ProRule" id="PRU01050"/>
    </source>
</evidence>
<comment type="function">
    <text evidence="1">An essential GTPase that binds both GDP and GTP, with rapid nucleotide exchange. Plays a role in 16S rRNA processing and 30S ribosomal subunit biogenesis and possibly also in cell cycle regulation and energy metabolism.</text>
</comment>
<comment type="subunit">
    <text evidence="1">Monomer.</text>
</comment>
<comment type="subcellular location">
    <subcellularLocation>
        <location>Cytoplasm</location>
    </subcellularLocation>
    <subcellularLocation>
        <location evidence="1">Cell inner membrane</location>
        <topology evidence="1">Peripheral membrane protein</topology>
    </subcellularLocation>
</comment>
<comment type="similarity">
    <text evidence="1 2">Belongs to the TRAFAC class TrmE-Era-EngA-EngB-Septin-like GTPase superfamily. Era GTPase family.</text>
</comment>
<sequence>MDIPNTTATIATIPQAPAGFRSGFVAIVGRPNVGKSTLMNQLVGQKIAITSPVAQTTRNRLQGIITTPSSQIILLDTPGIHKPHHELGRVLVKNAIQAIHSVDLVVFLVDSSATLGRGDRFVVDLLQKTDGPVVVGLNKQDQQPPDQREELNASYETLTENHGWPCFKFSALTGEGLSNFQSALEARLDPGPYYYPPDLVTDQPERFIMAELIREQILLLTRQEVPHSVAIAIEKVEETPERTNVFAAITVERGSQKGIIIGQKGSMLQAIGTAARQQIQKLISGDVYLKLFVKVEPKWRQSRQQLLEFGYRVEE</sequence>
<accession>Q55526</accession>
<gene>
    <name evidence="1" type="primary">era</name>
    <name type="ordered locus">slr0321</name>
</gene>
<dbReference type="EMBL" id="BA000022">
    <property type="protein sequence ID" value="BAA10021.1"/>
    <property type="molecule type" value="Genomic_DNA"/>
</dbReference>
<dbReference type="PIR" id="S76043">
    <property type="entry name" value="S76043"/>
</dbReference>
<dbReference type="SMR" id="Q55526"/>
<dbReference type="FunCoup" id="Q55526">
    <property type="interactions" value="467"/>
</dbReference>
<dbReference type="IntAct" id="Q55526">
    <property type="interactions" value="1"/>
</dbReference>
<dbReference type="STRING" id="1148.gene:10499513"/>
<dbReference type="PaxDb" id="1148-1001399"/>
<dbReference type="EnsemblBacteria" id="BAA10021">
    <property type="protein sequence ID" value="BAA10021"/>
    <property type="gene ID" value="BAA10021"/>
</dbReference>
<dbReference type="KEGG" id="syn:slr0321"/>
<dbReference type="eggNOG" id="COG1159">
    <property type="taxonomic scope" value="Bacteria"/>
</dbReference>
<dbReference type="InParanoid" id="Q55526"/>
<dbReference type="PhylomeDB" id="Q55526"/>
<dbReference type="Proteomes" id="UP000001425">
    <property type="component" value="Chromosome"/>
</dbReference>
<dbReference type="GO" id="GO:0005829">
    <property type="term" value="C:cytosol"/>
    <property type="evidence" value="ECO:0000318"/>
    <property type="project" value="GO_Central"/>
</dbReference>
<dbReference type="GO" id="GO:0005886">
    <property type="term" value="C:plasma membrane"/>
    <property type="evidence" value="ECO:0007669"/>
    <property type="project" value="UniProtKB-SubCell"/>
</dbReference>
<dbReference type="GO" id="GO:0005525">
    <property type="term" value="F:GTP binding"/>
    <property type="evidence" value="ECO:0007669"/>
    <property type="project" value="UniProtKB-UniRule"/>
</dbReference>
<dbReference type="GO" id="GO:0003924">
    <property type="term" value="F:GTPase activity"/>
    <property type="evidence" value="ECO:0007669"/>
    <property type="project" value="UniProtKB-UniRule"/>
</dbReference>
<dbReference type="GO" id="GO:0043024">
    <property type="term" value="F:ribosomal small subunit binding"/>
    <property type="evidence" value="ECO:0000318"/>
    <property type="project" value="GO_Central"/>
</dbReference>
<dbReference type="GO" id="GO:0019843">
    <property type="term" value="F:rRNA binding"/>
    <property type="evidence" value="ECO:0000318"/>
    <property type="project" value="GO_Central"/>
</dbReference>
<dbReference type="GO" id="GO:0070181">
    <property type="term" value="F:small ribosomal subunit rRNA binding"/>
    <property type="evidence" value="ECO:0007669"/>
    <property type="project" value="UniProtKB-UniRule"/>
</dbReference>
<dbReference type="GO" id="GO:0000028">
    <property type="term" value="P:ribosomal small subunit assembly"/>
    <property type="evidence" value="ECO:0000318"/>
    <property type="project" value="GO_Central"/>
</dbReference>
<dbReference type="CDD" id="cd04163">
    <property type="entry name" value="Era"/>
    <property type="match status" value="1"/>
</dbReference>
<dbReference type="CDD" id="cd22534">
    <property type="entry name" value="KH-II_Era"/>
    <property type="match status" value="1"/>
</dbReference>
<dbReference type="FunFam" id="3.40.50.300:FF:000094">
    <property type="entry name" value="GTPase Era"/>
    <property type="match status" value="1"/>
</dbReference>
<dbReference type="Gene3D" id="3.30.300.20">
    <property type="match status" value="1"/>
</dbReference>
<dbReference type="Gene3D" id="3.40.50.300">
    <property type="entry name" value="P-loop containing nucleotide triphosphate hydrolases"/>
    <property type="match status" value="1"/>
</dbReference>
<dbReference type="HAMAP" id="MF_00367">
    <property type="entry name" value="GTPase_Era"/>
    <property type="match status" value="1"/>
</dbReference>
<dbReference type="InterPro" id="IPR030388">
    <property type="entry name" value="G_ERA_dom"/>
</dbReference>
<dbReference type="InterPro" id="IPR006073">
    <property type="entry name" value="GTP-bd"/>
</dbReference>
<dbReference type="InterPro" id="IPR005662">
    <property type="entry name" value="GTPase_Era-like"/>
</dbReference>
<dbReference type="InterPro" id="IPR015946">
    <property type="entry name" value="KH_dom-like_a/b"/>
</dbReference>
<dbReference type="InterPro" id="IPR004044">
    <property type="entry name" value="KH_dom_type_2"/>
</dbReference>
<dbReference type="InterPro" id="IPR009019">
    <property type="entry name" value="KH_sf_prok-type"/>
</dbReference>
<dbReference type="InterPro" id="IPR027417">
    <property type="entry name" value="P-loop_NTPase"/>
</dbReference>
<dbReference type="InterPro" id="IPR005225">
    <property type="entry name" value="Small_GTP-bd"/>
</dbReference>
<dbReference type="NCBIfam" id="TIGR00436">
    <property type="entry name" value="era"/>
    <property type="match status" value="1"/>
</dbReference>
<dbReference type="NCBIfam" id="NF000908">
    <property type="entry name" value="PRK00089.1"/>
    <property type="match status" value="1"/>
</dbReference>
<dbReference type="NCBIfam" id="TIGR00231">
    <property type="entry name" value="small_GTP"/>
    <property type="match status" value="1"/>
</dbReference>
<dbReference type="PANTHER" id="PTHR42698">
    <property type="entry name" value="GTPASE ERA"/>
    <property type="match status" value="1"/>
</dbReference>
<dbReference type="PANTHER" id="PTHR42698:SF1">
    <property type="entry name" value="GTPASE ERA, MITOCHONDRIAL"/>
    <property type="match status" value="1"/>
</dbReference>
<dbReference type="Pfam" id="PF07650">
    <property type="entry name" value="KH_2"/>
    <property type="match status" value="1"/>
</dbReference>
<dbReference type="Pfam" id="PF01926">
    <property type="entry name" value="MMR_HSR1"/>
    <property type="match status" value="1"/>
</dbReference>
<dbReference type="PRINTS" id="PR00326">
    <property type="entry name" value="GTP1OBG"/>
</dbReference>
<dbReference type="SUPFAM" id="SSF52540">
    <property type="entry name" value="P-loop containing nucleoside triphosphate hydrolases"/>
    <property type="match status" value="1"/>
</dbReference>
<dbReference type="SUPFAM" id="SSF54814">
    <property type="entry name" value="Prokaryotic type KH domain (KH-domain type II)"/>
    <property type="match status" value="1"/>
</dbReference>
<dbReference type="PROSITE" id="PS51713">
    <property type="entry name" value="G_ERA"/>
    <property type="match status" value="1"/>
</dbReference>
<dbReference type="PROSITE" id="PS50823">
    <property type="entry name" value="KH_TYPE_2"/>
    <property type="match status" value="1"/>
</dbReference>
<proteinExistence type="inferred from homology"/>